<keyword id="KW-1185">Reference proteome</keyword>
<keyword id="KW-0686">Riboflavin biosynthesis</keyword>
<keyword id="KW-0808">Transferase</keyword>
<name>RISB_PROMM</name>
<reference key="1">
    <citation type="journal article" date="2003" name="Nature">
        <title>Genome divergence in two Prochlorococcus ecotypes reflects oceanic niche differentiation.</title>
        <authorList>
            <person name="Rocap G."/>
            <person name="Larimer F.W."/>
            <person name="Lamerdin J.E."/>
            <person name="Malfatti S."/>
            <person name="Chain P."/>
            <person name="Ahlgren N.A."/>
            <person name="Arellano A."/>
            <person name="Coleman M."/>
            <person name="Hauser L."/>
            <person name="Hess W.R."/>
            <person name="Johnson Z.I."/>
            <person name="Land M.L."/>
            <person name="Lindell D."/>
            <person name="Post A.F."/>
            <person name="Regala W."/>
            <person name="Shah M."/>
            <person name="Shaw S.L."/>
            <person name="Steglich C."/>
            <person name="Sullivan M.B."/>
            <person name="Ting C.S."/>
            <person name="Tolonen A."/>
            <person name="Webb E.A."/>
            <person name="Zinser E.R."/>
            <person name="Chisholm S.W."/>
        </authorList>
    </citation>
    <scope>NUCLEOTIDE SEQUENCE [LARGE SCALE GENOMIC DNA]</scope>
    <source>
        <strain>MIT 9313</strain>
    </source>
</reference>
<proteinExistence type="inferred from homology"/>
<accession>Q7V977</accession>
<protein>
    <recommendedName>
        <fullName evidence="1">6,7-dimethyl-8-ribityllumazine synthase</fullName>
        <shortName evidence="1">DMRL synthase</shortName>
        <shortName evidence="1">LS</shortName>
        <shortName evidence="1">Lumazine synthase</shortName>
        <ecNumber evidence="1">2.5.1.78</ecNumber>
    </recommendedName>
</protein>
<feature type="chain" id="PRO_0000134785" description="6,7-dimethyl-8-ribityllumazine synthase">
    <location>
        <begin position="1"/>
        <end position="165"/>
    </location>
</feature>
<feature type="active site" description="Proton donor" evidence="1">
    <location>
        <position position="94"/>
    </location>
</feature>
<feature type="binding site" evidence="1">
    <location>
        <position position="24"/>
    </location>
    <ligand>
        <name>5-amino-6-(D-ribitylamino)uracil</name>
        <dbReference type="ChEBI" id="CHEBI:15934"/>
    </ligand>
</feature>
<feature type="binding site" evidence="1">
    <location>
        <begin position="62"/>
        <end position="64"/>
    </location>
    <ligand>
        <name>5-amino-6-(D-ribitylamino)uracil</name>
        <dbReference type="ChEBI" id="CHEBI:15934"/>
    </ligand>
</feature>
<feature type="binding site" evidence="1">
    <location>
        <begin position="86"/>
        <end position="88"/>
    </location>
    <ligand>
        <name>5-amino-6-(D-ribitylamino)uracil</name>
        <dbReference type="ChEBI" id="CHEBI:15934"/>
    </ligand>
</feature>
<feature type="binding site" evidence="1">
    <location>
        <begin position="91"/>
        <end position="92"/>
    </location>
    <ligand>
        <name>(2S)-2-hydroxy-3-oxobutyl phosphate</name>
        <dbReference type="ChEBI" id="CHEBI:58830"/>
    </ligand>
</feature>
<feature type="binding site" evidence="1">
    <location>
        <position position="119"/>
    </location>
    <ligand>
        <name>5-amino-6-(D-ribitylamino)uracil</name>
        <dbReference type="ChEBI" id="CHEBI:15934"/>
    </ligand>
</feature>
<feature type="binding site" evidence="1">
    <location>
        <position position="133"/>
    </location>
    <ligand>
        <name>(2S)-2-hydroxy-3-oxobutyl phosphate</name>
        <dbReference type="ChEBI" id="CHEBI:58830"/>
    </ligand>
</feature>
<sequence length="165" mass="17382">MMATYEGCYTDAQALRIAVVVARFNDLVTGKLLSGCLDCLARHGVDTSSNSEQLDVAWVPGAFELPIVTQTLALSGQYQVVITLGAVIRGDTPHFDVVVAEASKGIASVSRETGVPVIFGVLTTDTMQQALERAGIKSNLGWSYGLQALEMGSLMAVLRSATSAS</sequence>
<dbReference type="EC" id="2.5.1.78" evidence="1"/>
<dbReference type="EMBL" id="BX548175">
    <property type="protein sequence ID" value="CAE20256.1"/>
    <property type="molecule type" value="Genomic_DNA"/>
</dbReference>
<dbReference type="SMR" id="Q7V977"/>
<dbReference type="KEGG" id="pmt:PMT_0081"/>
<dbReference type="eggNOG" id="COG0054">
    <property type="taxonomic scope" value="Bacteria"/>
</dbReference>
<dbReference type="HOGENOM" id="CLU_089358_1_0_3"/>
<dbReference type="UniPathway" id="UPA00275">
    <property type="reaction ID" value="UER00404"/>
</dbReference>
<dbReference type="Proteomes" id="UP000001423">
    <property type="component" value="Chromosome"/>
</dbReference>
<dbReference type="GO" id="GO:0005829">
    <property type="term" value="C:cytosol"/>
    <property type="evidence" value="ECO:0007669"/>
    <property type="project" value="TreeGrafter"/>
</dbReference>
<dbReference type="GO" id="GO:0009349">
    <property type="term" value="C:riboflavin synthase complex"/>
    <property type="evidence" value="ECO:0007669"/>
    <property type="project" value="InterPro"/>
</dbReference>
<dbReference type="GO" id="GO:0000906">
    <property type="term" value="F:6,7-dimethyl-8-ribityllumazine synthase activity"/>
    <property type="evidence" value="ECO:0007669"/>
    <property type="project" value="UniProtKB-UniRule"/>
</dbReference>
<dbReference type="GO" id="GO:0009231">
    <property type="term" value="P:riboflavin biosynthetic process"/>
    <property type="evidence" value="ECO:0007669"/>
    <property type="project" value="UniProtKB-UniRule"/>
</dbReference>
<dbReference type="CDD" id="cd09209">
    <property type="entry name" value="Lumazine_synthase-I"/>
    <property type="match status" value="1"/>
</dbReference>
<dbReference type="Gene3D" id="3.40.50.960">
    <property type="entry name" value="Lumazine/riboflavin synthase"/>
    <property type="match status" value="1"/>
</dbReference>
<dbReference type="HAMAP" id="MF_00178">
    <property type="entry name" value="Lumazine_synth"/>
    <property type="match status" value="1"/>
</dbReference>
<dbReference type="InterPro" id="IPR034964">
    <property type="entry name" value="LS"/>
</dbReference>
<dbReference type="InterPro" id="IPR002180">
    <property type="entry name" value="LS/RS"/>
</dbReference>
<dbReference type="InterPro" id="IPR036467">
    <property type="entry name" value="LS/RS_sf"/>
</dbReference>
<dbReference type="NCBIfam" id="TIGR00114">
    <property type="entry name" value="lumazine-synth"/>
    <property type="match status" value="1"/>
</dbReference>
<dbReference type="PANTHER" id="PTHR21058:SF0">
    <property type="entry name" value="6,7-DIMETHYL-8-RIBITYLLUMAZINE SYNTHASE"/>
    <property type="match status" value="1"/>
</dbReference>
<dbReference type="PANTHER" id="PTHR21058">
    <property type="entry name" value="6,7-DIMETHYL-8-RIBITYLLUMAZINE SYNTHASE DMRL SYNTHASE LUMAZINE SYNTHASE"/>
    <property type="match status" value="1"/>
</dbReference>
<dbReference type="Pfam" id="PF00885">
    <property type="entry name" value="DMRL_synthase"/>
    <property type="match status" value="1"/>
</dbReference>
<dbReference type="SUPFAM" id="SSF52121">
    <property type="entry name" value="Lumazine synthase"/>
    <property type="match status" value="1"/>
</dbReference>
<gene>
    <name evidence="1" type="primary">ribH</name>
    <name type="ordered locus">PMT_0081</name>
</gene>
<organism>
    <name type="scientific">Prochlorococcus marinus (strain MIT 9313)</name>
    <dbReference type="NCBI Taxonomy" id="74547"/>
    <lineage>
        <taxon>Bacteria</taxon>
        <taxon>Bacillati</taxon>
        <taxon>Cyanobacteriota</taxon>
        <taxon>Cyanophyceae</taxon>
        <taxon>Synechococcales</taxon>
        <taxon>Prochlorococcaceae</taxon>
        <taxon>Prochlorococcus</taxon>
    </lineage>
</organism>
<comment type="function">
    <text evidence="1">Catalyzes the formation of 6,7-dimethyl-8-ribityllumazine by condensation of 5-amino-6-(D-ribitylamino)uracil with 3,4-dihydroxy-2-butanone 4-phosphate. This is the penultimate step in the biosynthesis of riboflavin.</text>
</comment>
<comment type="catalytic activity">
    <reaction evidence="1">
        <text>(2S)-2-hydroxy-3-oxobutyl phosphate + 5-amino-6-(D-ribitylamino)uracil = 6,7-dimethyl-8-(1-D-ribityl)lumazine + phosphate + 2 H2O + H(+)</text>
        <dbReference type="Rhea" id="RHEA:26152"/>
        <dbReference type="ChEBI" id="CHEBI:15377"/>
        <dbReference type="ChEBI" id="CHEBI:15378"/>
        <dbReference type="ChEBI" id="CHEBI:15934"/>
        <dbReference type="ChEBI" id="CHEBI:43474"/>
        <dbReference type="ChEBI" id="CHEBI:58201"/>
        <dbReference type="ChEBI" id="CHEBI:58830"/>
        <dbReference type="EC" id="2.5.1.78"/>
    </reaction>
</comment>
<comment type="pathway">
    <text evidence="1">Cofactor biosynthesis; riboflavin biosynthesis; riboflavin from 2-hydroxy-3-oxobutyl phosphate and 5-amino-6-(D-ribitylamino)uracil: step 1/2.</text>
</comment>
<comment type="similarity">
    <text evidence="1">Belongs to the DMRL synthase family.</text>
</comment>
<evidence type="ECO:0000255" key="1">
    <source>
        <dbReference type="HAMAP-Rule" id="MF_00178"/>
    </source>
</evidence>